<name>Y4120_BACHK</name>
<feature type="chain" id="PRO_0000216964" description="UPF0297 protein BT9727_4120">
    <location>
        <begin position="1"/>
        <end position="88"/>
    </location>
</feature>
<gene>
    <name type="ordered locus">BT9727_4120</name>
</gene>
<accession>Q6HDD8</accession>
<dbReference type="EMBL" id="AE017355">
    <property type="protein sequence ID" value="AAT61024.1"/>
    <property type="molecule type" value="Genomic_DNA"/>
</dbReference>
<dbReference type="RefSeq" id="WP_000348590.1">
    <property type="nucleotide sequence ID" value="NC_005957.1"/>
</dbReference>
<dbReference type="RefSeq" id="YP_038438.1">
    <property type="nucleotide sequence ID" value="NC_005957.1"/>
</dbReference>
<dbReference type="SMR" id="Q6HDD8"/>
<dbReference type="KEGG" id="btk:BT9727_4120"/>
<dbReference type="PATRIC" id="fig|281309.8.peg.4397"/>
<dbReference type="HOGENOM" id="CLU_162466_0_0_9"/>
<dbReference type="Proteomes" id="UP000001301">
    <property type="component" value="Chromosome"/>
</dbReference>
<dbReference type="HAMAP" id="MF_01507">
    <property type="entry name" value="UPF0297"/>
    <property type="match status" value="1"/>
</dbReference>
<dbReference type="InterPro" id="IPR009309">
    <property type="entry name" value="IreB"/>
</dbReference>
<dbReference type="NCBIfam" id="NF003997">
    <property type="entry name" value="PRK05473.1"/>
    <property type="match status" value="1"/>
</dbReference>
<dbReference type="PANTHER" id="PTHR40067">
    <property type="entry name" value="UPF0297 PROTEIN YRZL"/>
    <property type="match status" value="1"/>
</dbReference>
<dbReference type="PANTHER" id="PTHR40067:SF1">
    <property type="entry name" value="UPF0297 PROTEIN YRZL"/>
    <property type="match status" value="1"/>
</dbReference>
<dbReference type="Pfam" id="PF06135">
    <property type="entry name" value="IreB"/>
    <property type="match status" value="1"/>
</dbReference>
<dbReference type="PIRSF" id="PIRSF037258">
    <property type="entry name" value="DUF965_bac"/>
    <property type="match status" value="1"/>
</dbReference>
<protein>
    <recommendedName>
        <fullName evidence="1">UPF0297 protein BT9727_4120</fullName>
    </recommendedName>
</protein>
<organism>
    <name type="scientific">Bacillus thuringiensis subsp. konkukian (strain 97-27)</name>
    <dbReference type="NCBI Taxonomy" id="281309"/>
    <lineage>
        <taxon>Bacteria</taxon>
        <taxon>Bacillati</taxon>
        <taxon>Bacillota</taxon>
        <taxon>Bacilli</taxon>
        <taxon>Bacillales</taxon>
        <taxon>Bacillaceae</taxon>
        <taxon>Bacillus</taxon>
        <taxon>Bacillus cereus group</taxon>
    </lineage>
</organism>
<comment type="similarity">
    <text evidence="1">Belongs to the UPF0297 family.</text>
</comment>
<proteinExistence type="inferred from homology"/>
<evidence type="ECO:0000255" key="1">
    <source>
        <dbReference type="HAMAP-Rule" id="MF_01507"/>
    </source>
</evidence>
<sequence length="88" mass="10330">MDGFDKTMKFSIQDEKQSVHVNDVLLTVYDALQEKGYNPINQIVGYLLSGDPAYIPRHKDARSIIRKLERDELIEELVKSYLKHHREE</sequence>
<reference key="1">
    <citation type="journal article" date="2006" name="J. Bacteriol.">
        <title>Pathogenomic sequence analysis of Bacillus cereus and Bacillus thuringiensis isolates closely related to Bacillus anthracis.</title>
        <authorList>
            <person name="Han C.S."/>
            <person name="Xie G."/>
            <person name="Challacombe J.F."/>
            <person name="Altherr M.R."/>
            <person name="Bhotika S.S."/>
            <person name="Bruce D."/>
            <person name="Campbell C.S."/>
            <person name="Campbell M.L."/>
            <person name="Chen J."/>
            <person name="Chertkov O."/>
            <person name="Cleland C."/>
            <person name="Dimitrijevic M."/>
            <person name="Doggett N.A."/>
            <person name="Fawcett J.J."/>
            <person name="Glavina T."/>
            <person name="Goodwin L.A."/>
            <person name="Hill K.K."/>
            <person name="Hitchcock P."/>
            <person name="Jackson P.J."/>
            <person name="Keim P."/>
            <person name="Kewalramani A.R."/>
            <person name="Longmire J."/>
            <person name="Lucas S."/>
            <person name="Malfatti S."/>
            <person name="McMurry K."/>
            <person name="Meincke L.J."/>
            <person name="Misra M."/>
            <person name="Moseman B.L."/>
            <person name="Mundt M."/>
            <person name="Munk A.C."/>
            <person name="Okinaka R.T."/>
            <person name="Parson-Quintana B."/>
            <person name="Reilly L.P."/>
            <person name="Richardson P."/>
            <person name="Robinson D.L."/>
            <person name="Rubin E."/>
            <person name="Saunders E."/>
            <person name="Tapia R."/>
            <person name="Tesmer J.G."/>
            <person name="Thayer N."/>
            <person name="Thompson L.S."/>
            <person name="Tice H."/>
            <person name="Ticknor L.O."/>
            <person name="Wills P.L."/>
            <person name="Brettin T.S."/>
            <person name="Gilna P."/>
        </authorList>
    </citation>
    <scope>NUCLEOTIDE SEQUENCE [LARGE SCALE GENOMIC DNA]</scope>
    <source>
        <strain>97-27</strain>
    </source>
</reference>